<accession>Q8CS73</accession>
<name>NRDR_STAES</name>
<feature type="chain" id="PRO_0000182352" description="Transcriptional repressor NrdR">
    <location>
        <begin position="1"/>
        <end position="156"/>
    </location>
</feature>
<feature type="domain" description="ATP-cone" evidence="1">
    <location>
        <begin position="49"/>
        <end position="139"/>
    </location>
</feature>
<feature type="zinc finger region" evidence="1">
    <location>
        <begin position="3"/>
        <end position="34"/>
    </location>
</feature>
<proteinExistence type="inferred from homology"/>
<sequence>MKCPKCNSTHSRVVDSRHADEANAIRRRRECENCGTRFTTFEHIEVSPLIVVKKDGTREQFLREKILNGLVRSCEKRPVRYQQLEDITNKVEWQLRDEGQTEISSREIGEHVMNLLMHVDQVSYVRFASVYKEFKDVDQLLESMQGILSDNKRSDK</sequence>
<dbReference type="EMBL" id="AE015929">
    <property type="protein sequence ID" value="AAO04959.1"/>
    <property type="molecule type" value="Genomic_DNA"/>
</dbReference>
<dbReference type="RefSeq" id="NP_764915.1">
    <property type="nucleotide sequence ID" value="NC_004461.1"/>
</dbReference>
<dbReference type="RefSeq" id="WP_001830825.1">
    <property type="nucleotide sequence ID" value="NZ_WBME01000016.1"/>
</dbReference>
<dbReference type="SMR" id="Q8CS73"/>
<dbReference type="GeneID" id="50018525"/>
<dbReference type="KEGG" id="sep:SE_1360"/>
<dbReference type="PATRIC" id="fig|176280.10.peg.1329"/>
<dbReference type="eggNOG" id="COG1327">
    <property type="taxonomic scope" value="Bacteria"/>
</dbReference>
<dbReference type="HOGENOM" id="CLU_108412_0_0_9"/>
<dbReference type="OrthoDB" id="9807461at2"/>
<dbReference type="Proteomes" id="UP000001411">
    <property type="component" value="Chromosome"/>
</dbReference>
<dbReference type="GO" id="GO:0005524">
    <property type="term" value="F:ATP binding"/>
    <property type="evidence" value="ECO:0007669"/>
    <property type="project" value="UniProtKB-KW"/>
</dbReference>
<dbReference type="GO" id="GO:0003677">
    <property type="term" value="F:DNA binding"/>
    <property type="evidence" value="ECO:0007669"/>
    <property type="project" value="UniProtKB-KW"/>
</dbReference>
<dbReference type="GO" id="GO:0008270">
    <property type="term" value="F:zinc ion binding"/>
    <property type="evidence" value="ECO:0007669"/>
    <property type="project" value="UniProtKB-UniRule"/>
</dbReference>
<dbReference type="GO" id="GO:0045892">
    <property type="term" value="P:negative regulation of DNA-templated transcription"/>
    <property type="evidence" value="ECO:0007669"/>
    <property type="project" value="UniProtKB-UniRule"/>
</dbReference>
<dbReference type="HAMAP" id="MF_00440">
    <property type="entry name" value="NrdR"/>
    <property type="match status" value="1"/>
</dbReference>
<dbReference type="InterPro" id="IPR005144">
    <property type="entry name" value="ATP-cone_dom"/>
</dbReference>
<dbReference type="InterPro" id="IPR055173">
    <property type="entry name" value="NrdR-like_N"/>
</dbReference>
<dbReference type="InterPro" id="IPR003796">
    <property type="entry name" value="RNR_NrdR-like"/>
</dbReference>
<dbReference type="NCBIfam" id="TIGR00244">
    <property type="entry name" value="transcriptional regulator NrdR"/>
    <property type="match status" value="1"/>
</dbReference>
<dbReference type="PANTHER" id="PTHR30455">
    <property type="entry name" value="TRANSCRIPTIONAL REPRESSOR NRDR"/>
    <property type="match status" value="1"/>
</dbReference>
<dbReference type="PANTHER" id="PTHR30455:SF2">
    <property type="entry name" value="TRANSCRIPTIONAL REPRESSOR NRDR"/>
    <property type="match status" value="1"/>
</dbReference>
<dbReference type="Pfam" id="PF03477">
    <property type="entry name" value="ATP-cone"/>
    <property type="match status" value="1"/>
</dbReference>
<dbReference type="Pfam" id="PF22811">
    <property type="entry name" value="Zn_ribbon_NrdR"/>
    <property type="match status" value="1"/>
</dbReference>
<dbReference type="PROSITE" id="PS51161">
    <property type="entry name" value="ATP_CONE"/>
    <property type="match status" value="1"/>
</dbReference>
<gene>
    <name evidence="1" type="primary">nrdR</name>
    <name type="ordered locus">SE_1360</name>
</gene>
<reference key="1">
    <citation type="journal article" date="2003" name="Mol. Microbiol.">
        <title>Genome-based analysis of virulence genes in a non-biofilm-forming Staphylococcus epidermidis strain (ATCC 12228).</title>
        <authorList>
            <person name="Zhang Y.-Q."/>
            <person name="Ren S.-X."/>
            <person name="Li H.-L."/>
            <person name="Wang Y.-X."/>
            <person name="Fu G."/>
            <person name="Yang J."/>
            <person name="Qin Z.-Q."/>
            <person name="Miao Y.-G."/>
            <person name="Wang W.-Y."/>
            <person name="Chen R.-S."/>
            <person name="Shen Y."/>
            <person name="Chen Z."/>
            <person name="Yuan Z.-H."/>
            <person name="Zhao G.-P."/>
            <person name="Qu D."/>
            <person name="Danchin A."/>
            <person name="Wen Y.-M."/>
        </authorList>
    </citation>
    <scope>NUCLEOTIDE SEQUENCE [LARGE SCALE GENOMIC DNA]</scope>
    <source>
        <strain>ATCC 12228 / FDA PCI 1200</strain>
    </source>
</reference>
<protein>
    <recommendedName>
        <fullName evidence="1">Transcriptional repressor NrdR</fullName>
    </recommendedName>
</protein>
<keyword id="KW-0067">ATP-binding</keyword>
<keyword id="KW-0238">DNA-binding</keyword>
<keyword id="KW-0479">Metal-binding</keyword>
<keyword id="KW-0547">Nucleotide-binding</keyword>
<keyword id="KW-0678">Repressor</keyword>
<keyword id="KW-0804">Transcription</keyword>
<keyword id="KW-0805">Transcription regulation</keyword>
<keyword id="KW-0862">Zinc</keyword>
<keyword id="KW-0863">Zinc-finger</keyword>
<comment type="function">
    <text evidence="1">Negatively regulates transcription of bacterial ribonucleotide reductase nrd genes and operons by binding to NrdR-boxes.</text>
</comment>
<comment type="cofactor">
    <cofactor evidence="1">
        <name>Zn(2+)</name>
        <dbReference type="ChEBI" id="CHEBI:29105"/>
    </cofactor>
    <text evidence="1">Binds 1 zinc ion.</text>
</comment>
<comment type="similarity">
    <text evidence="1">Belongs to the NrdR family.</text>
</comment>
<evidence type="ECO:0000255" key="1">
    <source>
        <dbReference type="HAMAP-Rule" id="MF_00440"/>
    </source>
</evidence>
<organism>
    <name type="scientific">Staphylococcus epidermidis (strain ATCC 12228 / FDA PCI 1200)</name>
    <dbReference type="NCBI Taxonomy" id="176280"/>
    <lineage>
        <taxon>Bacteria</taxon>
        <taxon>Bacillati</taxon>
        <taxon>Bacillota</taxon>
        <taxon>Bacilli</taxon>
        <taxon>Bacillales</taxon>
        <taxon>Staphylococcaceae</taxon>
        <taxon>Staphylococcus</taxon>
    </lineage>
</organism>